<sequence length="246" mass="26022">MLLIPAIDLKDGRCVRLRQGDLDDATVFSEDPAAMASHWLDLGARRLHLVDLNGAVAGKPKNEAPIKAILQAVGDDIPVQIGGGIRDLDTIERYLDAGISYVIIGTAAVKNPGFLQDACGAFPGQIIVGLDARDGKVATDGWSKLTRHDVLDLAKKFEDYGCEAIIYTDIGRDGMLSGVNVDATVRLAQHVRIPVFASGGIAGLSDIEALCAVEDDGVEGAILGRSIYEGALDFQAAQARADELAK</sequence>
<protein>
    <recommendedName>
        <fullName evidence="1">1-(5-phosphoribosyl)-5-[(5-phosphoribosylamino)methylideneamino] imidazole-4-carboxamide isomerase</fullName>
        <ecNumber evidence="1">5.3.1.16</ecNumber>
    </recommendedName>
    <alternativeName>
        <fullName evidence="1">Phosphoribosylformimino-5-aminoimidazole carboxamide ribotide isomerase</fullName>
    </alternativeName>
</protein>
<organism>
    <name type="scientific">Bordetella pertussis (strain Tohama I / ATCC BAA-589 / NCTC 13251)</name>
    <dbReference type="NCBI Taxonomy" id="257313"/>
    <lineage>
        <taxon>Bacteria</taxon>
        <taxon>Pseudomonadati</taxon>
        <taxon>Pseudomonadota</taxon>
        <taxon>Betaproteobacteria</taxon>
        <taxon>Burkholderiales</taxon>
        <taxon>Alcaligenaceae</taxon>
        <taxon>Bordetella</taxon>
    </lineage>
</organism>
<accession>Q7VSY7</accession>
<comment type="catalytic activity">
    <reaction evidence="1">
        <text>1-(5-phospho-beta-D-ribosyl)-5-[(5-phospho-beta-D-ribosylamino)methylideneamino]imidazole-4-carboxamide = 5-[(5-phospho-1-deoxy-D-ribulos-1-ylimino)methylamino]-1-(5-phospho-beta-D-ribosyl)imidazole-4-carboxamide</text>
        <dbReference type="Rhea" id="RHEA:15469"/>
        <dbReference type="ChEBI" id="CHEBI:58435"/>
        <dbReference type="ChEBI" id="CHEBI:58525"/>
        <dbReference type="EC" id="5.3.1.16"/>
    </reaction>
</comment>
<comment type="pathway">
    <text evidence="1">Amino-acid biosynthesis; L-histidine biosynthesis; L-histidine from 5-phospho-alpha-D-ribose 1-diphosphate: step 4/9.</text>
</comment>
<comment type="subcellular location">
    <subcellularLocation>
        <location evidence="1">Cytoplasm</location>
    </subcellularLocation>
</comment>
<comment type="similarity">
    <text evidence="1">Belongs to the HisA/HisF family.</text>
</comment>
<dbReference type="EC" id="5.3.1.16" evidence="1"/>
<dbReference type="EMBL" id="BX640422">
    <property type="protein sequence ID" value="CAE44028.1"/>
    <property type="molecule type" value="Genomic_DNA"/>
</dbReference>
<dbReference type="RefSeq" id="NP_882273.1">
    <property type="nucleotide sequence ID" value="NC_002929.2"/>
</dbReference>
<dbReference type="RefSeq" id="WP_010927224.1">
    <property type="nucleotide sequence ID" value="NZ_CP039022.1"/>
</dbReference>
<dbReference type="SMR" id="Q7VSY7"/>
<dbReference type="STRING" id="257313.BP3772"/>
<dbReference type="PaxDb" id="257313-BP3772"/>
<dbReference type="GeneID" id="93206068"/>
<dbReference type="KEGG" id="bpe:BP3772"/>
<dbReference type="PATRIC" id="fig|257313.5.peg.4076"/>
<dbReference type="eggNOG" id="COG0106">
    <property type="taxonomic scope" value="Bacteria"/>
</dbReference>
<dbReference type="HOGENOM" id="CLU_048577_1_1_4"/>
<dbReference type="UniPathway" id="UPA00031">
    <property type="reaction ID" value="UER00009"/>
</dbReference>
<dbReference type="Proteomes" id="UP000002676">
    <property type="component" value="Chromosome"/>
</dbReference>
<dbReference type="GO" id="GO:0005737">
    <property type="term" value="C:cytoplasm"/>
    <property type="evidence" value="ECO:0007669"/>
    <property type="project" value="UniProtKB-SubCell"/>
</dbReference>
<dbReference type="GO" id="GO:0003949">
    <property type="term" value="F:1-(5-phosphoribosyl)-5-[(5-phosphoribosylamino)methylideneamino]imidazole-4-carboxamide isomerase activity"/>
    <property type="evidence" value="ECO:0007669"/>
    <property type="project" value="UniProtKB-UniRule"/>
</dbReference>
<dbReference type="GO" id="GO:0000105">
    <property type="term" value="P:L-histidine biosynthetic process"/>
    <property type="evidence" value="ECO:0007669"/>
    <property type="project" value="UniProtKB-UniRule"/>
</dbReference>
<dbReference type="GO" id="GO:0000162">
    <property type="term" value="P:L-tryptophan biosynthetic process"/>
    <property type="evidence" value="ECO:0007669"/>
    <property type="project" value="TreeGrafter"/>
</dbReference>
<dbReference type="CDD" id="cd04732">
    <property type="entry name" value="HisA"/>
    <property type="match status" value="1"/>
</dbReference>
<dbReference type="FunFam" id="3.20.20.70:FF:000009">
    <property type="entry name" value="1-(5-phosphoribosyl)-5-[(5-phosphoribosylamino)methylideneamino] imidazole-4-carboxamide isomerase"/>
    <property type="match status" value="1"/>
</dbReference>
<dbReference type="Gene3D" id="3.20.20.70">
    <property type="entry name" value="Aldolase class I"/>
    <property type="match status" value="1"/>
</dbReference>
<dbReference type="HAMAP" id="MF_01014">
    <property type="entry name" value="HisA"/>
    <property type="match status" value="1"/>
</dbReference>
<dbReference type="InterPro" id="IPR013785">
    <property type="entry name" value="Aldolase_TIM"/>
</dbReference>
<dbReference type="InterPro" id="IPR006062">
    <property type="entry name" value="His_biosynth"/>
</dbReference>
<dbReference type="InterPro" id="IPR006063">
    <property type="entry name" value="HisA_bact_arch"/>
</dbReference>
<dbReference type="InterPro" id="IPR044524">
    <property type="entry name" value="Isoase_HisA-like"/>
</dbReference>
<dbReference type="InterPro" id="IPR023016">
    <property type="entry name" value="Isoase_HisA-like_bact"/>
</dbReference>
<dbReference type="InterPro" id="IPR011060">
    <property type="entry name" value="RibuloseP-bd_barrel"/>
</dbReference>
<dbReference type="NCBIfam" id="TIGR00007">
    <property type="entry name" value="1-(5-phosphoribosyl)-5-[(5-phosphoribosylamino)methylideneamino]imidazole-4-carboxamide isomerase"/>
    <property type="match status" value="1"/>
</dbReference>
<dbReference type="PANTHER" id="PTHR43090">
    <property type="entry name" value="1-(5-PHOSPHORIBOSYL)-5-[(5-PHOSPHORIBOSYLAMINO)METHYLIDENEAMINO] IMIDAZOLE-4-CARBOXAMIDE ISOMERASE"/>
    <property type="match status" value="1"/>
</dbReference>
<dbReference type="PANTHER" id="PTHR43090:SF2">
    <property type="entry name" value="1-(5-PHOSPHORIBOSYL)-5-[(5-PHOSPHORIBOSYLAMINO)METHYLIDENEAMINO] IMIDAZOLE-4-CARBOXAMIDE ISOMERASE"/>
    <property type="match status" value="1"/>
</dbReference>
<dbReference type="Pfam" id="PF00977">
    <property type="entry name" value="His_biosynth"/>
    <property type="match status" value="1"/>
</dbReference>
<dbReference type="SUPFAM" id="SSF51366">
    <property type="entry name" value="Ribulose-phoshate binding barrel"/>
    <property type="match status" value="1"/>
</dbReference>
<evidence type="ECO:0000255" key="1">
    <source>
        <dbReference type="HAMAP-Rule" id="MF_01014"/>
    </source>
</evidence>
<reference key="1">
    <citation type="journal article" date="2003" name="Nat. Genet.">
        <title>Comparative analysis of the genome sequences of Bordetella pertussis, Bordetella parapertussis and Bordetella bronchiseptica.</title>
        <authorList>
            <person name="Parkhill J."/>
            <person name="Sebaihia M."/>
            <person name="Preston A."/>
            <person name="Murphy L.D."/>
            <person name="Thomson N.R."/>
            <person name="Harris D.E."/>
            <person name="Holden M.T.G."/>
            <person name="Churcher C.M."/>
            <person name="Bentley S.D."/>
            <person name="Mungall K.L."/>
            <person name="Cerdeno-Tarraga A.-M."/>
            <person name="Temple L."/>
            <person name="James K.D."/>
            <person name="Harris B."/>
            <person name="Quail M.A."/>
            <person name="Achtman M."/>
            <person name="Atkin R."/>
            <person name="Baker S."/>
            <person name="Basham D."/>
            <person name="Bason N."/>
            <person name="Cherevach I."/>
            <person name="Chillingworth T."/>
            <person name="Collins M."/>
            <person name="Cronin A."/>
            <person name="Davis P."/>
            <person name="Doggett J."/>
            <person name="Feltwell T."/>
            <person name="Goble A."/>
            <person name="Hamlin N."/>
            <person name="Hauser H."/>
            <person name="Holroyd S."/>
            <person name="Jagels K."/>
            <person name="Leather S."/>
            <person name="Moule S."/>
            <person name="Norberczak H."/>
            <person name="O'Neil S."/>
            <person name="Ormond D."/>
            <person name="Price C."/>
            <person name="Rabbinowitsch E."/>
            <person name="Rutter S."/>
            <person name="Sanders M."/>
            <person name="Saunders D."/>
            <person name="Seeger K."/>
            <person name="Sharp S."/>
            <person name="Simmonds M."/>
            <person name="Skelton J."/>
            <person name="Squares R."/>
            <person name="Squares S."/>
            <person name="Stevens K."/>
            <person name="Unwin L."/>
            <person name="Whitehead S."/>
            <person name="Barrell B.G."/>
            <person name="Maskell D.J."/>
        </authorList>
    </citation>
    <scope>NUCLEOTIDE SEQUENCE [LARGE SCALE GENOMIC DNA]</scope>
    <source>
        <strain>Tohama I / ATCC BAA-589 / NCTC 13251</strain>
    </source>
</reference>
<name>HIS4_BORPE</name>
<proteinExistence type="inferred from homology"/>
<keyword id="KW-0028">Amino-acid biosynthesis</keyword>
<keyword id="KW-0963">Cytoplasm</keyword>
<keyword id="KW-0368">Histidine biosynthesis</keyword>
<keyword id="KW-0413">Isomerase</keyword>
<keyword id="KW-1185">Reference proteome</keyword>
<gene>
    <name evidence="1" type="primary">hisA</name>
    <name type="ordered locus">BP3772</name>
</gene>
<feature type="chain" id="PRO_0000141983" description="1-(5-phosphoribosyl)-5-[(5-phosphoribosylamino)methylideneamino] imidazole-4-carboxamide isomerase">
    <location>
        <begin position="1"/>
        <end position="246"/>
    </location>
</feature>
<feature type="active site" description="Proton acceptor" evidence="1">
    <location>
        <position position="8"/>
    </location>
</feature>
<feature type="active site" description="Proton donor" evidence="1">
    <location>
        <position position="131"/>
    </location>
</feature>